<protein>
    <recommendedName>
        <fullName evidence="4">Trans-enoyl reductase tasC</fullName>
        <shortName evidence="4">ER tasC</shortName>
        <ecNumber evidence="3">1.-.-.-</ecNumber>
    </recommendedName>
    <alternativeName>
        <fullName evidence="4">Tetramic acid Sch210971/2 biosynthesis cluster protein C</fullName>
    </alternativeName>
</protein>
<evidence type="ECO:0000250" key="1">
    <source>
        <dbReference type="UniProtKB" id="Q9Y7D0"/>
    </source>
</evidence>
<evidence type="ECO:0000255" key="2"/>
<evidence type="ECO:0000269" key="3">
    <source>
    </source>
</evidence>
<evidence type="ECO:0000303" key="4">
    <source>
    </source>
</evidence>
<evidence type="ECO:0000305" key="5"/>
<name>TASC_HAPIR</name>
<organism>
    <name type="scientific">Hapsidospora irregularis</name>
    <dbReference type="NCBI Taxonomy" id="95324"/>
    <lineage>
        <taxon>Eukaryota</taxon>
        <taxon>Fungi</taxon>
        <taxon>Dikarya</taxon>
        <taxon>Ascomycota</taxon>
        <taxon>Pezizomycotina</taxon>
        <taxon>Sordariomycetes</taxon>
        <taxon>Hypocreomycetidae</taxon>
        <taxon>Hypocreales</taxon>
        <taxon>Bionectriaceae</taxon>
        <taxon>Hapsidospora</taxon>
    </lineage>
</organism>
<dbReference type="EC" id="1.-.-.-" evidence="3"/>
<dbReference type="EMBL" id="KP835202">
    <property type="protein sequence ID" value="AKG54856.1"/>
    <property type="molecule type" value="Genomic_DNA"/>
</dbReference>
<dbReference type="SMR" id="A0A0F7GFI5"/>
<dbReference type="GO" id="GO:0000166">
    <property type="term" value="F:nucleotide binding"/>
    <property type="evidence" value="ECO:0007669"/>
    <property type="project" value="UniProtKB-KW"/>
</dbReference>
<dbReference type="GO" id="GO:0016651">
    <property type="term" value="F:oxidoreductase activity, acting on NAD(P)H"/>
    <property type="evidence" value="ECO:0007669"/>
    <property type="project" value="InterPro"/>
</dbReference>
<dbReference type="CDD" id="cd08249">
    <property type="entry name" value="enoyl_reductase_like"/>
    <property type="match status" value="1"/>
</dbReference>
<dbReference type="Gene3D" id="3.90.180.10">
    <property type="entry name" value="Medium-chain alcohol dehydrogenases, catalytic domain"/>
    <property type="match status" value="1"/>
</dbReference>
<dbReference type="Gene3D" id="3.40.50.720">
    <property type="entry name" value="NAD(P)-binding Rossmann-like Domain"/>
    <property type="match status" value="1"/>
</dbReference>
<dbReference type="InterPro" id="IPR013149">
    <property type="entry name" value="ADH-like_C"/>
</dbReference>
<dbReference type="InterPro" id="IPR013154">
    <property type="entry name" value="ADH-like_N"/>
</dbReference>
<dbReference type="InterPro" id="IPR011032">
    <property type="entry name" value="GroES-like_sf"/>
</dbReference>
<dbReference type="InterPro" id="IPR036291">
    <property type="entry name" value="NAD(P)-bd_dom_sf"/>
</dbReference>
<dbReference type="InterPro" id="IPR020843">
    <property type="entry name" value="PKS_ER"/>
</dbReference>
<dbReference type="InterPro" id="IPR047122">
    <property type="entry name" value="Trans-enoyl_RdTase-like"/>
</dbReference>
<dbReference type="PANTHER" id="PTHR45348">
    <property type="entry name" value="HYPOTHETICAL OXIDOREDUCTASE (EUROFUNG)"/>
    <property type="match status" value="1"/>
</dbReference>
<dbReference type="PANTHER" id="PTHR45348:SF1">
    <property type="entry name" value="TRANS-ENOYL REDUCTASE STHE"/>
    <property type="match status" value="1"/>
</dbReference>
<dbReference type="Pfam" id="PF08240">
    <property type="entry name" value="ADH_N"/>
    <property type="match status" value="1"/>
</dbReference>
<dbReference type="Pfam" id="PF00107">
    <property type="entry name" value="ADH_zinc_N"/>
    <property type="match status" value="1"/>
</dbReference>
<dbReference type="SMART" id="SM00829">
    <property type="entry name" value="PKS_ER"/>
    <property type="match status" value="1"/>
</dbReference>
<dbReference type="SUPFAM" id="SSF50129">
    <property type="entry name" value="GroES-like"/>
    <property type="match status" value="1"/>
</dbReference>
<dbReference type="SUPFAM" id="SSF51735">
    <property type="entry name" value="NAD(P)-binding Rossmann-fold domains"/>
    <property type="match status" value="1"/>
</dbReference>
<keyword id="KW-0521">NADP</keyword>
<keyword id="KW-0547">Nucleotide-binding</keyword>
<keyword id="KW-0560">Oxidoreductase</keyword>
<accession>A0A0F7GFI5</accession>
<sequence length="385" mass="40464">MTVSNKTQTALVGSPDGAIILSDTAPLPPSQLEDEQVAVAVQAVSLNPVDTKMAGDYHTPGAISGCEFAGVVTAVGPGAASEWGLGPGDRVSAAIMGMNPLRPSIGAFAQHSVAPAHCLLKMRDDWGFAQAAGLGNSWYTVAWALFHVMGLPAGPELEPLHTKHPPPAREPRISIDNPAPNGGGGKRTTVLVSGGSSSTGTCAIQLLKLAGFDVVATSSARNFDLVRSYGADAVFDHSSPSVAADIKAHTRNGLRLALDCITTPDTTRLCYGAIGRTGGRYVSLDPYSEVVAASRAVVRADWVLGPELMGEDVGWPAPHGRKGNPEAKAFCKVWNRTLQGLLDRGAIRTHPQRVRDTGLRGVLEGLDDIREKRVSGEKLVYTLQV</sequence>
<feature type="chain" id="PRO_0000453336" description="Trans-enoyl reductase tasC">
    <location>
        <begin position="1"/>
        <end position="385"/>
    </location>
</feature>
<feature type="binding site" evidence="1">
    <location>
        <begin position="49"/>
        <end position="52"/>
    </location>
    <ligand>
        <name>NADP(+)</name>
        <dbReference type="ChEBI" id="CHEBI:58349"/>
    </ligand>
</feature>
<feature type="binding site" evidence="2">
    <location>
        <begin position="136"/>
        <end position="143"/>
    </location>
    <ligand>
        <name>substrate</name>
    </ligand>
</feature>
<feature type="binding site" evidence="1">
    <location>
        <begin position="196"/>
        <end position="199"/>
    </location>
    <ligand>
        <name>NADP(+)</name>
        <dbReference type="ChEBI" id="CHEBI:58349"/>
    </ligand>
</feature>
<feature type="binding site" evidence="1">
    <location>
        <begin position="219"/>
        <end position="222"/>
    </location>
    <ligand>
        <name>NADP(+)</name>
        <dbReference type="ChEBI" id="CHEBI:58349"/>
    </ligand>
</feature>
<feature type="binding site" evidence="1">
    <location>
        <begin position="284"/>
        <end position="285"/>
    </location>
    <ligand>
        <name>NADP(+)</name>
        <dbReference type="ChEBI" id="CHEBI:58349"/>
    </ligand>
</feature>
<feature type="binding site" evidence="2">
    <location>
        <begin position="305"/>
        <end position="309"/>
    </location>
    <ligand>
        <name>substrate</name>
    </ligand>
</feature>
<feature type="binding site" evidence="1">
    <location>
        <begin position="374"/>
        <end position="375"/>
    </location>
    <ligand>
        <name>NADP(+)</name>
        <dbReference type="ChEBI" id="CHEBI:58349"/>
    </ligand>
</feature>
<proteinExistence type="evidence at protein level"/>
<comment type="function">
    <text evidence="3">Trans-enoyl reductase; part of the gene cluster that mediates the biosynthesis of the tetramic acids Sch210971 and Sch210972, potential anti-HIV fungal natural product that contain a decalin core (PubMed:25885659). The PKS module of tasS together with the enoylreductase tasC catalyze the formation of the polyketide unit which is then conjugated to 4-hydroxyl-4-methyl glutamate (HMG) by the condensation domain of the tasS NRPS module (PubMed:25885659). One unique structural feature of Sch210971 and Sch210972 is the tetramic acid motif proposed to be derived from the non-proteinogenic amino acid HMG, by a Dieckmann-type condensation catalyzed by the reductase domain of tasS (PubMed:25885659). The aldolase tasA catalyzes the aldol condensation of 2 molecules of pyruvic acid to yield the intermediate 4-hydroxyl-4-methyl-2-oxoglutarate (HMOG), which can then be stereoselectively transaminated, may be by tasG, to form HMG (PubMed:25885659). The Diels-Alderase tas3 then uses the Dieckmann product of tasS as substrate and catalyzes the Diels-Alder cycloaddition to form the decalin ring of Sch210971 and Sch210972 (PubMed:25885659).</text>
</comment>
<comment type="catalytic activity">
    <reaction evidence="3">
        <text>(2S,4S)-4-hydroxy-4-methylglutamate + 8 malonyl-CoA + 3 S-adenosyl-L-methionine + ATP + 8 NADPH + 11 H(+) = (2S)-3-[(2S)-3,5-dioxo-4-[(2E,4R,6R,8E,10E,12E)-4,6,12-trimethyltetradeca-2,8,10,12-tetraenoyl]pyrrolidin-2-yl]-2-hydroxy-2-methylpropanoate + AMP + 3 S-adenosyl-L-homocysteine + 8 CO2 + diphosphate + 8 NADP(+) + 8 CoA + 6 H2O</text>
        <dbReference type="Rhea" id="RHEA:67264"/>
        <dbReference type="ChEBI" id="CHEBI:15377"/>
        <dbReference type="ChEBI" id="CHEBI:15378"/>
        <dbReference type="ChEBI" id="CHEBI:16526"/>
        <dbReference type="ChEBI" id="CHEBI:30616"/>
        <dbReference type="ChEBI" id="CHEBI:33019"/>
        <dbReference type="ChEBI" id="CHEBI:57287"/>
        <dbReference type="ChEBI" id="CHEBI:57384"/>
        <dbReference type="ChEBI" id="CHEBI:57783"/>
        <dbReference type="ChEBI" id="CHEBI:57856"/>
        <dbReference type="ChEBI" id="CHEBI:58349"/>
        <dbReference type="ChEBI" id="CHEBI:59789"/>
        <dbReference type="ChEBI" id="CHEBI:167901"/>
        <dbReference type="ChEBI" id="CHEBI:167907"/>
        <dbReference type="ChEBI" id="CHEBI:456215"/>
    </reaction>
    <physiologicalReaction direction="left-to-right" evidence="3">
        <dbReference type="Rhea" id="RHEA:67265"/>
    </physiologicalReaction>
</comment>
<comment type="catalytic activity">
    <reaction evidence="3">
        <text>(2S,4R)-4-hydroxy-4-methylglutamate + 8 malonyl-CoA + 3 S-adenosyl-L-methionine + ATP + 8 NADPH + 11 H(+) = (2R)-3-[(2S)-3,5-dioxo-4-[(2E,4R,6R,8E,10E,12E)-4,6,12-trimethyltetradeca-2,8,10,12-tetraenoyl]pyrrolidin-2-yl]-2-hydroxy-2-methylpropanoate + AMP + 3 S-adenosyl-L-homocysteine + 8 CO2 + diphosphate + 8 NADP(+) + 8 CoA + 6 H2O</text>
        <dbReference type="Rhea" id="RHEA:67316"/>
        <dbReference type="ChEBI" id="CHEBI:15377"/>
        <dbReference type="ChEBI" id="CHEBI:15378"/>
        <dbReference type="ChEBI" id="CHEBI:16526"/>
        <dbReference type="ChEBI" id="CHEBI:30616"/>
        <dbReference type="ChEBI" id="CHEBI:33019"/>
        <dbReference type="ChEBI" id="CHEBI:57287"/>
        <dbReference type="ChEBI" id="CHEBI:57384"/>
        <dbReference type="ChEBI" id="CHEBI:57783"/>
        <dbReference type="ChEBI" id="CHEBI:57856"/>
        <dbReference type="ChEBI" id="CHEBI:58349"/>
        <dbReference type="ChEBI" id="CHEBI:59789"/>
        <dbReference type="ChEBI" id="CHEBI:167910"/>
        <dbReference type="ChEBI" id="CHEBI:167912"/>
        <dbReference type="ChEBI" id="CHEBI:456215"/>
    </reaction>
    <physiologicalReaction direction="left-to-right" evidence="3">
        <dbReference type="Rhea" id="RHEA:67317"/>
    </physiologicalReaction>
</comment>
<comment type="pathway">
    <text evidence="3">Secondary metabolite biosynthesis.</text>
</comment>
<comment type="subunit">
    <text evidence="1">Monomer.</text>
</comment>
<comment type="similarity">
    <text evidence="5">Belongs to the zinc-containing alcohol dehydrogenase family.</text>
</comment>
<reference key="1">
    <citation type="journal article" date="2015" name="Org. Lett.">
        <title>Biosynthesis of the tetramic acids Sch210971 and Sch210972.</title>
        <authorList>
            <person name="Kakule T.B."/>
            <person name="Zhang S."/>
            <person name="Zhan J."/>
            <person name="Schmidt E.W."/>
        </authorList>
    </citation>
    <scope>NUCLEOTIDE SEQUENCE [GENOMIC DNA]</scope>
    <scope>FUNCTION</scope>
    <scope>CATALYTIC ACTIVITY</scope>
    <scope>PATHWAY</scope>
</reference>
<gene>
    <name evidence="4" type="primary">tasC</name>
</gene>